<dbReference type="EMBL" id="CU928160">
    <property type="protein sequence ID" value="CAQ99910.1"/>
    <property type="molecule type" value="Genomic_DNA"/>
</dbReference>
<dbReference type="RefSeq" id="WP_000091700.1">
    <property type="nucleotide sequence ID" value="NC_011741.1"/>
</dbReference>
<dbReference type="SMR" id="B7LYZ2"/>
<dbReference type="KEGG" id="ecr:ECIAI1_3095"/>
<dbReference type="HOGENOM" id="CLU_170994_0_0_6"/>
<dbReference type="GO" id="GO:0005829">
    <property type="term" value="C:cytosol"/>
    <property type="evidence" value="ECO:0007669"/>
    <property type="project" value="TreeGrafter"/>
</dbReference>
<dbReference type="GO" id="GO:0005506">
    <property type="term" value="F:iron ion binding"/>
    <property type="evidence" value="ECO:0007669"/>
    <property type="project" value="UniProtKB-UniRule"/>
</dbReference>
<dbReference type="GO" id="GO:0034599">
    <property type="term" value="P:cellular response to oxidative stress"/>
    <property type="evidence" value="ECO:0007669"/>
    <property type="project" value="TreeGrafter"/>
</dbReference>
<dbReference type="FunFam" id="1.10.3880.10:FF:000001">
    <property type="entry name" value="Probable Fe(2+)-trafficking protein"/>
    <property type="match status" value="1"/>
</dbReference>
<dbReference type="Gene3D" id="1.10.3880.10">
    <property type="entry name" value="Fe(II) trafficking protein YggX"/>
    <property type="match status" value="1"/>
</dbReference>
<dbReference type="HAMAP" id="MF_00686">
    <property type="entry name" value="Fe_traffic_YggX"/>
    <property type="match status" value="1"/>
</dbReference>
<dbReference type="InterPro" id="IPR007457">
    <property type="entry name" value="Fe_traffick_prot_YggX"/>
</dbReference>
<dbReference type="InterPro" id="IPR036766">
    <property type="entry name" value="Fe_traffick_prot_YggX_sf"/>
</dbReference>
<dbReference type="NCBIfam" id="NF003817">
    <property type="entry name" value="PRK05408.1"/>
    <property type="match status" value="1"/>
</dbReference>
<dbReference type="PANTHER" id="PTHR36965">
    <property type="entry name" value="FE(2+)-TRAFFICKING PROTEIN-RELATED"/>
    <property type="match status" value="1"/>
</dbReference>
<dbReference type="PANTHER" id="PTHR36965:SF1">
    <property type="entry name" value="FE(2+)-TRAFFICKING PROTEIN-RELATED"/>
    <property type="match status" value="1"/>
</dbReference>
<dbReference type="Pfam" id="PF04362">
    <property type="entry name" value="Iron_traffic"/>
    <property type="match status" value="1"/>
</dbReference>
<dbReference type="PIRSF" id="PIRSF029827">
    <property type="entry name" value="Fe_traffic_YggX"/>
    <property type="match status" value="1"/>
</dbReference>
<dbReference type="SUPFAM" id="SSF111148">
    <property type="entry name" value="YggX-like"/>
    <property type="match status" value="1"/>
</dbReference>
<reference key="1">
    <citation type="journal article" date="2009" name="PLoS Genet.">
        <title>Organised genome dynamics in the Escherichia coli species results in highly diverse adaptive paths.</title>
        <authorList>
            <person name="Touchon M."/>
            <person name="Hoede C."/>
            <person name="Tenaillon O."/>
            <person name="Barbe V."/>
            <person name="Baeriswyl S."/>
            <person name="Bidet P."/>
            <person name="Bingen E."/>
            <person name="Bonacorsi S."/>
            <person name="Bouchier C."/>
            <person name="Bouvet O."/>
            <person name="Calteau A."/>
            <person name="Chiapello H."/>
            <person name="Clermont O."/>
            <person name="Cruveiller S."/>
            <person name="Danchin A."/>
            <person name="Diard M."/>
            <person name="Dossat C."/>
            <person name="Karoui M.E."/>
            <person name="Frapy E."/>
            <person name="Garry L."/>
            <person name="Ghigo J.M."/>
            <person name="Gilles A.M."/>
            <person name="Johnson J."/>
            <person name="Le Bouguenec C."/>
            <person name="Lescat M."/>
            <person name="Mangenot S."/>
            <person name="Martinez-Jehanne V."/>
            <person name="Matic I."/>
            <person name="Nassif X."/>
            <person name="Oztas S."/>
            <person name="Petit M.A."/>
            <person name="Pichon C."/>
            <person name="Rouy Z."/>
            <person name="Ruf C.S."/>
            <person name="Schneider D."/>
            <person name="Tourret J."/>
            <person name="Vacherie B."/>
            <person name="Vallenet D."/>
            <person name="Medigue C."/>
            <person name="Rocha E.P.C."/>
            <person name="Denamur E."/>
        </authorList>
    </citation>
    <scope>NUCLEOTIDE SEQUENCE [LARGE SCALE GENOMIC DNA]</scope>
    <source>
        <strain>IAI1</strain>
    </source>
</reference>
<gene>
    <name evidence="1" type="primary">yggX</name>
    <name type="ordered locus">ECIAI1_3095</name>
</gene>
<name>FETP_ECO8A</name>
<sequence>MSRTIFCTFLQREAEGQDFQLYPGELGKRIYNEISKEAWAQWQHKQTMLINEKKLNMMNAEHRKLLEQEMVNFLFEGKEVHIEGYTPEDKK</sequence>
<proteinExistence type="inferred from homology"/>
<protein>
    <recommendedName>
        <fullName evidence="1">Probable Fe(2+)-trafficking protein</fullName>
    </recommendedName>
</protein>
<feature type="chain" id="PRO_1000131842" description="Probable Fe(2+)-trafficking protein">
    <location>
        <begin position="1"/>
        <end position="91"/>
    </location>
</feature>
<evidence type="ECO:0000255" key="1">
    <source>
        <dbReference type="HAMAP-Rule" id="MF_00686"/>
    </source>
</evidence>
<organism>
    <name type="scientific">Escherichia coli O8 (strain IAI1)</name>
    <dbReference type="NCBI Taxonomy" id="585034"/>
    <lineage>
        <taxon>Bacteria</taxon>
        <taxon>Pseudomonadati</taxon>
        <taxon>Pseudomonadota</taxon>
        <taxon>Gammaproteobacteria</taxon>
        <taxon>Enterobacterales</taxon>
        <taxon>Enterobacteriaceae</taxon>
        <taxon>Escherichia</taxon>
    </lineage>
</organism>
<keyword id="KW-0408">Iron</keyword>
<comment type="function">
    <text evidence="1">Could be a mediator in iron transactions between iron acquisition and iron-requiring processes, such as synthesis and/or repair of Fe-S clusters in biosynthetic enzymes.</text>
</comment>
<comment type="subunit">
    <text evidence="1">Monomer.</text>
</comment>
<comment type="similarity">
    <text evidence="1">Belongs to the Fe(2+)-trafficking protein family.</text>
</comment>
<accession>B7LYZ2</accession>